<dbReference type="EC" id="7.-.-.-" evidence="1"/>
<dbReference type="EMBL" id="AM933173">
    <property type="protein sequence ID" value="CAR37518.1"/>
    <property type="molecule type" value="Genomic_DNA"/>
</dbReference>
<dbReference type="RefSeq" id="WP_000133179.1">
    <property type="nucleotide sequence ID" value="NC_011274.1"/>
</dbReference>
<dbReference type="SMR" id="B5RAK0"/>
<dbReference type="GeneID" id="66755900"/>
<dbReference type="KEGG" id="seg:SG1659"/>
<dbReference type="HOGENOM" id="CLU_095255_1_0_6"/>
<dbReference type="Proteomes" id="UP000008321">
    <property type="component" value="Chromosome"/>
</dbReference>
<dbReference type="GO" id="GO:0005886">
    <property type="term" value="C:plasma membrane"/>
    <property type="evidence" value="ECO:0007669"/>
    <property type="project" value="UniProtKB-SubCell"/>
</dbReference>
<dbReference type="GO" id="GO:0022900">
    <property type="term" value="P:electron transport chain"/>
    <property type="evidence" value="ECO:0007669"/>
    <property type="project" value="UniProtKB-UniRule"/>
</dbReference>
<dbReference type="HAMAP" id="MF_00459">
    <property type="entry name" value="RsxA_RnfA"/>
    <property type="match status" value="1"/>
</dbReference>
<dbReference type="InterPro" id="IPR011293">
    <property type="entry name" value="Ion_transpt_RnfA/RsxA"/>
</dbReference>
<dbReference type="InterPro" id="IPR003667">
    <property type="entry name" value="NqrDE/RnfAE"/>
</dbReference>
<dbReference type="InterPro" id="IPR050133">
    <property type="entry name" value="NqrDE/RnfAE_oxidrdctase"/>
</dbReference>
<dbReference type="NCBIfam" id="NF003481">
    <property type="entry name" value="PRK05151.1"/>
    <property type="match status" value="1"/>
</dbReference>
<dbReference type="NCBIfam" id="TIGR01943">
    <property type="entry name" value="rnfA"/>
    <property type="match status" value="1"/>
</dbReference>
<dbReference type="PANTHER" id="PTHR30335">
    <property type="entry name" value="INTEGRAL MEMBRANE PROTEIN OF SOXR-REDUCING COMPLEX"/>
    <property type="match status" value="1"/>
</dbReference>
<dbReference type="PANTHER" id="PTHR30335:SF0">
    <property type="entry name" value="ION-TRANSLOCATING OXIDOREDUCTASE COMPLEX SUBUNIT A"/>
    <property type="match status" value="1"/>
</dbReference>
<dbReference type="Pfam" id="PF02508">
    <property type="entry name" value="Rnf-Nqr"/>
    <property type="match status" value="1"/>
</dbReference>
<dbReference type="PIRSF" id="PIRSF006102">
    <property type="entry name" value="NQR_DE"/>
    <property type="match status" value="1"/>
</dbReference>
<feature type="chain" id="PRO_1000191734" description="Ion-translocating oxidoreductase complex subunit A">
    <location>
        <begin position="1"/>
        <end position="193"/>
    </location>
</feature>
<feature type="transmembrane region" description="Helical" evidence="1">
    <location>
        <begin position="5"/>
        <end position="25"/>
    </location>
</feature>
<feature type="transmembrane region" description="Helical" evidence="1">
    <location>
        <begin position="47"/>
        <end position="67"/>
    </location>
</feature>
<feature type="transmembrane region" description="Helical" evidence="1">
    <location>
        <begin position="72"/>
        <end position="92"/>
    </location>
</feature>
<feature type="transmembrane region" description="Helical" evidence="1">
    <location>
        <begin position="102"/>
        <end position="122"/>
    </location>
</feature>
<feature type="transmembrane region" description="Helical" evidence="1">
    <location>
        <begin position="134"/>
        <end position="154"/>
    </location>
</feature>
<feature type="transmembrane region" description="Helical" evidence="1">
    <location>
        <begin position="171"/>
        <end position="191"/>
    </location>
</feature>
<proteinExistence type="inferred from homology"/>
<accession>B5RAK0</accession>
<organism>
    <name type="scientific">Salmonella gallinarum (strain 287/91 / NCTC 13346)</name>
    <dbReference type="NCBI Taxonomy" id="550538"/>
    <lineage>
        <taxon>Bacteria</taxon>
        <taxon>Pseudomonadati</taxon>
        <taxon>Pseudomonadota</taxon>
        <taxon>Gammaproteobacteria</taxon>
        <taxon>Enterobacterales</taxon>
        <taxon>Enterobacteriaceae</taxon>
        <taxon>Salmonella</taxon>
    </lineage>
</organism>
<reference key="1">
    <citation type="journal article" date="2008" name="Genome Res.">
        <title>Comparative genome analysis of Salmonella enteritidis PT4 and Salmonella gallinarum 287/91 provides insights into evolutionary and host adaptation pathways.</title>
        <authorList>
            <person name="Thomson N.R."/>
            <person name="Clayton D.J."/>
            <person name="Windhorst D."/>
            <person name="Vernikos G."/>
            <person name="Davidson S."/>
            <person name="Churcher C."/>
            <person name="Quail M.A."/>
            <person name="Stevens M."/>
            <person name="Jones M.A."/>
            <person name="Watson M."/>
            <person name="Barron A."/>
            <person name="Layton A."/>
            <person name="Pickard D."/>
            <person name="Kingsley R.A."/>
            <person name="Bignell A."/>
            <person name="Clark L."/>
            <person name="Harris B."/>
            <person name="Ormond D."/>
            <person name="Abdellah Z."/>
            <person name="Brooks K."/>
            <person name="Cherevach I."/>
            <person name="Chillingworth T."/>
            <person name="Woodward J."/>
            <person name="Norberczak H."/>
            <person name="Lord A."/>
            <person name="Arrowsmith C."/>
            <person name="Jagels K."/>
            <person name="Moule S."/>
            <person name="Mungall K."/>
            <person name="Saunders M."/>
            <person name="Whitehead S."/>
            <person name="Chabalgoity J.A."/>
            <person name="Maskell D."/>
            <person name="Humphreys T."/>
            <person name="Roberts M."/>
            <person name="Barrow P.A."/>
            <person name="Dougan G."/>
            <person name="Parkhill J."/>
        </authorList>
    </citation>
    <scope>NUCLEOTIDE SEQUENCE [LARGE SCALE GENOMIC DNA]</scope>
    <source>
        <strain>287/91 / NCTC 13346</strain>
    </source>
</reference>
<comment type="function">
    <text evidence="1">Part of a membrane-bound complex that couples electron transfer with translocation of ions across the membrane. Required to maintain the reduced state of SoxR.</text>
</comment>
<comment type="subunit">
    <text evidence="1">The complex is composed of six subunits: RsxA, RsxB, RsxC, RsxD, RsxE and RsxG.</text>
</comment>
<comment type="subcellular location">
    <subcellularLocation>
        <location evidence="1">Cell inner membrane</location>
        <topology evidence="1">Multi-pass membrane protein</topology>
    </subcellularLocation>
</comment>
<comment type="similarity">
    <text evidence="1">Belongs to the NqrDE/RnfAE family.</text>
</comment>
<protein>
    <recommendedName>
        <fullName evidence="1">Ion-translocating oxidoreductase complex subunit A</fullName>
        <ecNumber evidence="1">7.-.-.-</ecNumber>
    </recommendedName>
    <alternativeName>
        <fullName evidence="1">Rsx electron transport complex subunit A</fullName>
    </alternativeName>
</protein>
<keyword id="KW-0997">Cell inner membrane</keyword>
<keyword id="KW-1003">Cell membrane</keyword>
<keyword id="KW-0249">Electron transport</keyword>
<keyword id="KW-0472">Membrane</keyword>
<keyword id="KW-1278">Translocase</keyword>
<keyword id="KW-0812">Transmembrane</keyword>
<keyword id="KW-1133">Transmembrane helix</keyword>
<keyword id="KW-0813">Transport</keyword>
<name>RSXA_SALG2</name>
<gene>
    <name evidence="1" type="primary">rsxA</name>
    <name type="synonym">rnfA</name>
    <name type="ordered locus">SG1659</name>
</gene>
<sequence>MTDYLLLFVGTVLVNNFVLVKFLGLCPFMGVSKKLETAMGMGLATTFVMTLASICAWLIDTWILIPLDLIYLRTLAFILVIAVVVQFTEMVVRKTSPALYRLLGIFLPLITTNCAVLGVALLNINLGHHFLQSALYGFSAAVGFSLVMVLFAAIRERLAVADVPAPFRGNAIALITAGLMSLAFMGFSGLVKL</sequence>
<evidence type="ECO:0000255" key="1">
    <source>
        <dbReference type="HAMAP-Rule" id="MF_00459"/>
    </source>
</evidence>